<feature type="initiator methionine" description="Removed" evidence="2 3">
    <location>
        <position position="1"/>
    </location>
</feature>
<feature type="chain" id="PRO_0000053206" description="Hemoglobin subunit epsilon">
    <location>
        <begin position="2"/>
        <end position="147"/>
    </location>
</feature>
<feature type="domain" description="Globin" evidence="1">
    <location>
        <begin position="3"/>
        <end position="147"/>
    </location>
</feature>
<feature type="binding site" description="distal binding residue" evidence="1">
    <location>
        <position position="64"/>
    </location>
    <ligand>
        <name>heme b</name>
        <dbReference type="ChEBI" id="CHEBI:60344"/>
    </ligand>
    <ligandPart>
        <name>Fe</name>
        <dbReference type="ChEBI" id="CHEBI:18248"/>
    </ligandPart>
</feature>
<feature type="binding site" description="proximal binding residue" evidence="1">
    <location>
        <position position="93"/>
    </location>
    <ligand>
        <name>heme b</name>
        <dbReference type="ChEBI" id="CHEBI:60344"/>
    </ligand>
    <ligandPart>
        <name>Fe</name>
        <dbReference type="ChEBI" id="CHEBI:18248"/>
    </ligandPart>
</feature>
<feature type="sequence variant">
    <original>R</original>
    <variation>K</variation>
    <location>
        <position position="60"/>
    </location>
</feature>
<proteinExistence type="evidence at protein level"/>
<name>HBE_CHICK</name>
<sequence length="147" mass="16603">MVHWSAEEKQLITSVWSKVNVEECGAEALARLLIVYPWTQRFFASFGNLSSPTAIMGNPRVRAHGKKVLSSFGEAVKNLDNIKNTYAKLSELHCDKLHVDPENFRLLGDILIIVLASHFARDFTPACQFAWQKLVNVVAHALARKYH</sequence>
<accession>P02128</accession>
<comment type="function">
    <text>Beta-type chain found in early embryos.</text>
</comment>
<comment type="subunit">
    <text>Heterotetramer of two epsilon chains and two alpha chains. Hemoglobin E (Hbe) contains a alpha-A chains while hemoglobin M (Hbm) contains alpha-D chains.</text>
</comment>
<comment type="similarity">
    <text evidence="1">Belongs to the globin family.</text>
</comment>
<dbReference type="EMBL" id="K00824">
    <property type="protein sequence ID" value="AAA48807.1"/>
    <property type="molecule type" value="Genomic_DNA"/>
</dbReference>
<dbReference type="EMBL" id="L17432">
    <property type="protein sequence ID" value="AAD03348.1"/>
    <property type="molecule type" value="Genomic_DNA"/>
</dbReference>
<dbReference type="PIR" id="I50250">
    <property type="entry name" value="HECH"/>
</dbReference>
<dbReference type="RefSeq" id="NP_001075173.3">
    <property type="nucleotide sequence ID" value="NM_001081704.3"/>
</dbReference>
<dbReference type="SMR" id="P02128"/>
<dbReference type="FunCoup" id="P02128">
    <property type="interactions" value="20"/>
</dbReference>
<dbReference type="STRING" id="9031.ENSGALP00000047510"/>
<dbReference type="PaxDb" id="9031-ENSGALP00000027976"/>
<dbReference type="GeneID" id="107049060"/>
<dbReference type="KEGG" id="gga:107049060"/>
<dbReference type="CTD" id="107049060"/>
<dbReference type="VEuPathDB" id="HostDB:geneid_107049060"/>
<dbReference type="eggNOG" id="KOG3378">
    <property type="taxonomic scope" value="Eukaryota"/>
</dbReference>
<dbReference type="InParanoid" id="P02128"/>
<dbReference type="OMA" id="TPHVQAC"/>
<dbReference type="OrthoDB" id="9886081at2759"/>
<dbReference type="PhylomeDB" id="P02128"/>
<dbReference type="PRO" id="PR:P02128"/>
<dbReference type="Proteomes" id="UP000000539">
    <property type="component" value="Unassembled WGS sequence"/>
</dbReference>
<dbReference type="GO" id="GO:0031838">
    <property type="term" value="C:haptoglobin-hemoglobin complex"/>
    <property type="evidence" value="ECO:0000318"/>
    <property type="project" value="GO_Central"/>
</dbReference>
<dbReference type="GO" id="GO:0005833">
    <property type="term" value="C:hemoglobin complex"/>
    <property type="evidence" value="ECO:0000318"/>
    <property type="project" value="GO_Central"/>
</dbReference>
<dbReference type="GO" id="GO:0020037">
    <property type="term" value="F:heme binding"/>
    <property type="evidence" value="ECO:0000318"/>
    <property type="project" value="GO_Central"/>
</dbReference>
<dbReference type="GO" id="GO:0046872">
    <property type="term" value="F:metal ion binding"/>
    <property type="evidence" value="ECO:0007669"/>
    <property type="project" value="UniProtKB-KW"/>
</dbReference>
<dbReference type="GO" id="GO:0019825">
    <property type="term" value="F:oxygen binding"/>
    <property type="evidence" value="ECO:0000318"/>
    <property type="project" value="GO_Central"/>
</dbReference>
<dbReference type="GO" id="GO:0005344">
    <property type="term" value="F:oxygen carrier activity"/>
    <property type="evidence" value="ECO:0000318"/>
    <property type="project" value="GO_Central"/>
</dbReference>
<dbReference type="GO" id="GO:0098869">
    <property type="term" value="P:cellular oxidant detoxification"/>
    <property type="evidence" value="ECO:0007669"/>
    <property type="project" value="GOC"/>
</dbReference>
<dbReference type="GO" id="GO:0042744">
    <property type="term" value="P:hydrogen peroxide catabolic process"/>
    <property type="evidence" value="ECO:0000318"/>
    <property type="project" value="GO_Central"/>
</dbReference>
<dbReference type="CDD" id="cd08925">
    <property type="entry name" value="Hb-beta-like"/>
    <property type="match status" value="1"/>
</dbReference>
<dbReference type="FunFam" id="1.10.490.10:FF:000001">
    <property type="entry name" value="Hemoglobin subunit beta"/>
    <property type="match status" value="1"/>
</dbReference>
<dbReference type="Gene3D" id="1.10.490.10">
    <property type="entry name" value="Globins"/>
    <property type="match status" value="1"/>
</dbReference>
<dbReference type="InterPro" id="IPR000971">
    <property type="entry name" value="Globin"/>
</dbReference>
<dbReference type="InterPro" id="IPR009050">
    <property type="entry name" value="Globin-like_sf"/>
</dbReference>
<dbReference type="InterPro" id="IPR012292">
    <property type="entry name" value="Globin/Proto"/>
</dbReference>
<dbReference type="InterPro" id="IPR002337">
    <property type="entry name" value="Hemoglobin_b"/>
</dbReference>
<dbReference type="InterPro" id="IPR050056">
    <property type="entry name" value="Hemoglobin_oxygen_transport"/>
</dbReference>
<dbReference type="PANTHER" id="PTHR11442">
    <property type="entry name" value="HEMOGLOBIN FAMILY MEMBER"/>
    <property type="match status" value="1"/>
</dbReference>
<dbReference type="PANTHER" id="PTHR11442:SF7">
    <property type="entry name" value="HEMOGLOBIN SUBUNIT EPSILON"/>
    <property type="match status" value="1"/>
</dbReference>
<dbReference type="Pfam" id="PF00042">
    <property type="entry name" value="Globin"/>
    <property type="match status" value="1"/>
</dbReference>
<dbReference type="PRINTS" id="PR00814">
    <property type="entry name" value="BETAHAEM"/>
</dbReference>
<dbReference type="SUPFAM" id="SSF46458">
    <property type="entry name" value="Globin-like"/>
    <property type="match status" value="1"/>
</dbReference>
<dbReference type="PROSITE" id="PS01033">
    <property type="entry name" value="GLOBIN"/>
    <property type="match status" value="1"/>
</dbReference>
<evidence type="ECO:0000255" key="1">
    <source>
        <dbReference type="PROSITE-ProRule" id="PRU00238"/>
    </source>
</evidence>
<evidence type="ECO:0000269" key="2">
    <source>
    </source>
</evidence>
<evidence type="ECO:0000269" key="3">
    <source>
    </source>
</evidence>
<keyword id="KW-0903">Direct protein sequencing</keyword>
<keyword id="KW-0349">Heme</keyword>
<keyword id="KW-0408">Iron</keyword>
<keyword id="KW-0479">Metal-binding</keyword>
<keyword id="KW-0561">Oxygen transport</keyword>
<keyword id="KW-1185">Reference proteome</keyword>
<keyword id="KW-0813">Transport</keyword>
<protein>
    <recommendedName>
        <fullName>Hemoglobin subunit epsilon</fullName>
    </recommendedName>
    <alternativeName>
        <fullName>Epsilon-globin</fullName>
    </alternativeName>
    <alternativeName>
        <fullName>Hemoglobin epsilon chain</fullName>
    </alternativeName>
</protein>
<organism>
    <name type="scientific">Gallus gallus</name>
    <name type="common">Chicken</name>
    <dbReference type="NCBI Taxonomy" id="9031"/>
    <lineage>
        <taxon>Eukaryota</taxon>
        <taxon>Metazoa</taxon>
        <taxon>Chordata</taxon>
        <taxon>Craniata</taxon>
        <taxon>Vertebrata</taxon>
        <taxon>Euteleostomi</taxon>
        <taxon>Archelosauria</taxon>
        <taxon>Archosauria</taxon>
        <taxon>Dinosauria</taxon>
        <taxon>Saurischia</taxon>
        <taxon>Theropoda</taxon>
        <taxon>Coelurosauria</taxon>
        <taxon>Aves</taxon>
        <taxon>Neognathae</taxon>
        <taxon>Galloanserae</taxon>
        <taxon>Galliformes</taxon>
        <taxon>Phasianidae</taxon>
        <taxon>Phasianinae</taxon>
        <taxon>Gallus</taxon>
    </lineage>
</organism>
<reference key="1">
    <citation type="journal article" date="1983" name="J. Biol. Chem.">
        <title>The nucleotide sequence of the embryonic chicken beta-type globin genes.</title>
        <authorList>
            <person name="Dodgson J.B."/>
            <person name="Stadt S.J."/>
            <person name="Choi O.-R."/>
            <person name="Dolan M."/>
            <person name="Fischer H.D."/>
            <person name="Engel J.D."/>
        </authorList>
    </citation>
    <scope>NUCLEOTIDE SEQUENCE [GENOMIC DNA]</scope>
</reference>
<reference key="2">
    <citation type="journal article" date="1993" name="Genomics">
        <title>Primary sequence, evolution, and repetitive elements of the Gallus gallus (chicken) beta-globin cluster.</title>
        <authorList>
            <person name="Reitman M."/>
            <person name="Grasso J.A."/>
            <person name="Blumenthal R."/>
            <person name="Lewit P."/>
        </authorList>
    </citation>
    <scope>NUCLEOTIDE SEQUENCE [GENOMIC DNA]</scope>
</reference>
<reference key="3">
    <citation type="journal article" date="1982" name="J. Biol. Chem.">
        <title>Amino acid sequences of the epsilon and alpha E globins of HbE, a minor early embryonic hemoglobin of the chicken.</title>
        <authorList>
            <person name="Chapman B.S."/>
            <person name="Hood L.E."/>
            <person name="Tobin A.J."/>
        </authorList>
    </citation>
    <scope>PROTEIN SEQUENCE OF 2-147</scope>
</reference>
<reference key="4">
    <citation type="journal article" date="1982" name="J. Biol. Chem.">
        <title>Minor early embryonic chick hemoglobin M. Amino acid sequences of the epsilon and alpha D chains.</title>
        <authorList>
            <person name="Chapman B.S."/>
            <person name="Hood L.E."/>
            <person name="Tobin A.J."/>
        </authorList>
    </citation>
    <scope>PROTEIN SEQUENCE OF 2-147</scope>
</reference>
<gene>
    <name type="primary">HBE</name>
</gene>